<gene>
    <name evidence="1" type="primary">rplQ</name>
    <name type="ordered locus">MADE_1013930</name>
</gene>
<keyword id="KW-0687">Ribonucleoprotein</keyword>
<keyword id="KW-0689">Ribosomal protein</keyword>
<name>RL17_ALTMD</name>
<accession>B4RT54</accession>
<accession>F2GAI6</accession>
<sequence>MRHRKSGRQLNRNSSHRQAMFKNMAGSLVKHEVIKTTLPKAKELRRVIEPLITMAKEDSVANRRLAFARTGDKEVVGKLFNELGPRYEARPGGYTRILKCGFRAGDNAPMAYVELVDRPVVEAEEEAVEATEE</sequence>
<protein>
    <recommendedName>
        <fullName evidence="1">Large ribosomal subunit protein bL17</fullName>
    </recommendedName>
    <alternativeName>
        <fullName evidence="2">50S ribosomal protein L17</fullName>
    </alternativeName>
</protein>
<organism>
    <name type="scientific">Alteromonas mediterranea (strain DSM 17117 / CIP 110805 / LMG 28347 / Deep ecotype)</name>
    <dbReference type="NCBI Taxonomy" id="1774373"/>
    <lineage>
        <taxon>Bacteria</taxon>
        <taxon>Pseudomonadati</taxon>
        <taxon>Pseudomonadota</taxon>
        <taxon>Gammaproteobacteria</taxon>
        <taxon>Alteromonadales</taxon>
        <taxon>Alteromonadaceae</taxon>
        <taxon>Alteromonas/Salinimonas group</taxon>
        <taxon>Alteromonas</taxon>
    </lineage>
</organism>
<evidence type="ECO:0000255" key="1">
    <source>
        <dbReference type="HAMAP-Rule" id="MF_01368"/>
    </source>
</evidence>
<evidence type="ECO:0000305" key="2"/>
<reference key="1">
    <citation type="journal article" date="2008" name="ISME J.">
        <title>Comparative genomics of two ecotypes of the marine planktonic copiotroph Alteromonas macleodii suggests alternative lifestyles associated with different kinds of particulate organic matter.</title>
        <authorList>
            <person name="Ivars-Martinez E."/>
            <person name="Martin-Cuadrado A.-B."/>
            <person name="D'Auria G."/>
            <person name="Mira A."/>
            <person name="Ferriera S."/>
            <person name="Johnson J."/>
            <person name="Friedman R."/>
            <person name="Rodriguez-Valera F."/>
        </authorList>
    </citation>
    <scope>NUCLEOTIDE SEQUENCE [LARGE SCALE GENOMIC DNA]</scope>
    <source>
        <strain>DSM 17117 / CIP 110805 / LMG 28347 / Deep ecotype</strain>
    </source>
</reference>
<proteinExistence type="inferred from homology"/>
<dbReference type="EMBL" id="CP001103">
    <property type="protein sequence ID" value="AEA98920.1"/>
    <property type="molecule type" value="Genomic_DNA"/>
</dbReference>
<dbReference type="RefSeq" id="WP_012519212.1">
    <property type="nucleotide sequence ID" value="NC_011138.3"/>
</dbReference>
<dbReference type="SMR" id="B4RT54"/>
<dbReference type="GeneID" id="56343820"/>
<dbReference type="KEGG" id="amc:MADE_1013930"/>
<dbReference type="HOGENOM" id="CLU_074407_2_0_6"/>
<dbReference type="Proteomes" id="UP000001870">
    <property type="component" value="Chromosome"/>
</dbReference>
<dbReference type="GO" id="GO:0022625">
    <property type="term" value="C:cytosolic large ribosomal subunit"/>
    <property type="evidence" value="ECO:0007669"/>
    <property type="project" value="TreeGrafter"/>
</dbReference>
<dbReference type="GO" id="GO:0003735">
    <property type="term" value="F:structural constituent of ribosome"/>
    <property type="evidence" value="ECO:0007669"/>
    <property type="project" value="InterPro"/>
</dbReference>
<dbReference type="GO" id="GO:0006412">
    <property type="term" value="P:translation"/>
    <property type="evidence" value="ECO:0007669"/>
    <property type="project" value="UniProtKB-UniRule"/>
</dbReference>
<dbReference type="FunFam" id="3.90.1030.10:FF:000001">
    <property type="entry name" value="50S ribosomal protein L17"/>
    <property type="match status" value="1"/>
</dbReference>
<dbReference type="Gene3D" id="3.90.1030.10">
    <property type="entry name" value="Ribosomal protein L17"/>
    <property type="match status" value="1"/>
</dbReference>
<dbReference type="HAMAP" id="MF_01368">
    <property type="entry name" value="Ribosomal_bL17"/>
    <property type="match status" value="1"/>
</dbReference>
<dbReference type="InterPro" id="IPR000456">
    <property type="entry name" value="Ribosomal_bL17"/>
</dbReference>
<dbReference type="InterPro" id="IPR047859">
    <property type="entry name" value="Ribosomal_bL17_CS"/>
</dbReference>
<dbReference type="InterPro" id="IPR036373">
    <property type="entry name" value="Ribosomal_bL17_sf"/>
</dbReference>
<dbReference type="NCBIfam" id="TIGR00059">
    <property type="entry name" value="L17"/>
    <property type="match status" value="1"/>
</dbReference>
<dbReference type="PANTHER" id="PTHR14413:SF16">
    <property type="entry name" value="LARGE RIBOSOMAL SUBUNIT PROTEIN BL17M"/>
    <property type="match status" value="1"/>
</dbReference>
<dbReference type="PANTHER" id="PTHR14413">
    <property type="entry name" value="RIBOSOMAL PROTEIN L17"/>
    <property type="match status" value="1"/>
</dbReference>
<dbReference type="Pfam" id="PF01196">
    <property type="entry name" value="Ribosomal_L17"/>
    <property type="match status" value="1"/>
</dbReference>
<dbReference type="SUPFAM" id="SSF64263">
    <property type="entry name" value="Prokaryotic ribosomal protein L17"/>
    <property type="match status" value="1"/>
</dbReference>
<dbReference type="PROSITE" id="PS01167">
    <property type="entry name" value="RIBOSOMAL_L17"/>
    <property type="match status" value="1"/>
</dbReference>
<feature type="chain" id="PRO_1000144369" description="Large ribosomal subunit protein bL17">
    <location>
        <begin position="1"/>
        <end position="133"/>
    </location>
</feature>
<comment type="subunit">
    <text evidence="1">Part of the 50S ribosomal subunit. Contacts protein L32.</text>
</comment>
<comment type="similarity">
    <text evidence="1">Belongs to the bacterial ribosomal protein bL17 family.</text>
</comment>